<organism>
    <name type="scientific">Rattus norvegicus</name>
    <name type="common">Rat</name>
    <dbReference type="NCBI Taxonomy" id="10116"/>
    <lineage>
        <taxon>Eukaryota</taxon>
        <taxon>Metazoa</taxon>
        <taxon>Chordata</taxon>
        <taxon>Craniata</taxon>
        <taxon>Vertebrata</taxon>
        <taxon>Euteleostomi</taxon>
        <taxon>Mammalia</taxon>
        <taxon>Eutheria</taxon>
        <taxon>Euarchontoglires</taxon>
        <taxon>Glires</taxon>
        <taxon>Rodentia</taxon>
        <taxon>Myomorpha</taxon>
        <taxon>Muroidea</taxon>
        <taxon>Muridae</taxon>
        <taxon>Murinae</taxon>
        <taxon>Rattus</taxon>
    </lineage>
</organism>
<feature type="chain" id="PRO_0000137116" description="Nucleoside diphosphate kinase A">
    <location>
        <begin position="1"/>
        <end position="152"/>
    </location>
</feature>
<feature type="active site" description="Pros-phosphohistidine intermediate" evidence="1">
    <location>
        <position position="118"/>
    </location>
</feature>
<feature type="binding site" evidence="1">
    <location>
        <position position="12"/>
    </location>
    <ligand>
        <name>ATP</name>
        <dbReference type="ChEBI" id="CHEBI:30616"/>
    </ligand>
</feature>
<feature type="binding site" evidence="1">
    <location>
        <position position="60"/>
    </location>
    <ligand>
        <name>ATP</name>
        <dbReference type="ChEBI" id="CHEBI:30616"/>
    </ligand>
</feature>
<feature type="binding site" evidence="1">
    <location>
        <position position="88"/>
    </location>
    <ligand>
        <name>ATP</name>
        <dbReference type="ChEBI" id="CHEBI:30616"/>
    </ligand>
</feature>
<feature type="binding site" evidence="1">
    <location>
        <position position="94"/>
    </location>
    <ligand>
        <name>ATP</name>
        <dbReference type="ChEBI" id="CHEBI:30616"/>
    </ligand>
</feature>
<feature type="binding site" evidence="1">
    <location>
        <position position="105"/>
    </location>
    <ligand>
        <name>ATP</name>
        <dbReference type="ChEBI" id="CHEBI:30616"/>
    </ligand>
</feature>
<feature type="binding site" evidence="1">
    <location>
        <position position="115"/>
    </location>
    <ligand>
        <name>ATP</name>
        <dbReference type="ChEBI" id="CHEBI:30616"/>
    </ligand>
</feature>
<feature type="modified residue" description="Phosphoserine" evidence="2">
    <location>
        <position position="120"/>
    </location>
</feature>
<feature type="modified residue" description="Phosphoserine" evidence="2">
    <location>
        <position position="122"/>
    </location>
</feature>
<feature type="modified residue" description="Phosphoserine" evidence="2">
    <location>
        <position position="125"/>
    </location>
</feature>
<feature type="cross-link" description="Glycyl lysine isopeptide (Lys-Gly) (interchain with G-Cter in ubiquitin)" evidence="2">
    <location>
        <position position="100"/>
    </location>
</feature>
<comment type="function">
    <text evidence="1">Major role in the synthesis of nucleoside triphosphates other than ATP. The ATP gamma phosphate is transferred to the NDP beta phosphate via a ping-pong mechanism, using a phosphorylated active-site intermediate. Possesses nucleoside-diphosphate kinase, serine/threonine-specific protein kinase, geranyl and farnesyl pyrophosphate kinase, histidine protein kinase and 3'-5' exonuclease activities. Involved in cell proliferation, differentiation and development, signal transduction, G protein-coupled receptor endocytosis, and gene expression. Required for neural development including neural patterning and cell fate determination. During GZMA-mediated cell death, works in concert with TREX1. NME1 nicks one strand of DNA and TREX1 removes bases from the free 3' end to enhance DNA damage and prevent DNA end reannealing and rapid repair (By similarity).</text>
</comment>
<comment type="catalytic activity">
    <reaction>
        <text>a 2'-deoxyribonucleoside 5'-diphosphate + ATP = a 2'-deoxyribonucleoside 5'-triphosphate + ADP</text>
        <dbReference type="Rhea" id="RHEA:44640"/>
        <dbReference type="ChEBI" id="CHEBI:30616"/>
        <dbReference type="ChEBI" id="CHEBI:61560"/>
        <dbReference type="ChEBI" id="CHEBI:73316"/>
        <dbReference type="ChEBI" id="CHEBI:456216"/>
        <dbReference type="EC" id="2.7.4.6"/>
    </reaction>
</comment>
<comment type="catalytic activity">
    <reaction>
        <text>a ribonucleoside 5'-diphosphate + ATP = a ribonucleoside 5'-triphosphate + ADP</text>
        <dbReference type="Rhea" id="RHEA:18113"/>
        <dbReference type="ChEBI" id="CHEBI:30616"/>
        <dbReference type="ChEBI" id="CHEBI:57930"/>
        <dbReference type="ChEBI" id="CHEBI:61557"/>
        <dbReference type="ChEBI" id="CHEBI:456216"/>
        <dbReference type="EC" id="2.7.4.6"/>
    </reaction>
</comment>
<comment type="cofactor">
    <cofactor evidence="1">
        <name>Mg(2+)</name>
        <dbReference type="ChEBI" id="CHEBI:18420"/>
    </cofactor>
</comment>
<comment type="activity regulation">
    <text evidence="1">Autophosphorylation at His-118 increases serine/threonine protein kinase activity of the enzyme. Interaction with the SET complex inhibits exonuclease activity (By similarity).</text>
</comment>
<comment type="subunit">
    <text evidence="2">Hexamer of two different chains: A and B (A6, A5B, A4B2, A3B3, A2B4, AB5, B6). Interacts with PRUNE1. Component of the SET complex, composed of at least ANP32A, APEX1, HMGB2, NME1, SET and TREX1. Within this complex, interacts directly with SET. Also interacts with TREX1, but only following translocation to the nucleus.</text>
</comment>
<comment type="interaction">
    <interactant intactId="EBI-1165329">
        <id>Q05982</id>
    </interactant>
    <interactant intactId="EBI-9869387">
        <id>O00255-2</id>
        <label>MEN1</label>
    </interactant>
    <organismsDiffer>true</organismsDiffer>
    <experiments>5</experiments>
</comment>
<comment type="subcellular location">
    <subcellularLocation>
        <location>Cytoplasm</location>
    </subcellularLocation>
    <subcellularLocation>
        <location>Nucleus</location>
    </subcellularLocation>
</comment>
<comment type="disease">
    <text>This protein is found in reduced amount in tumor cells of high metastatic potential.</text>
</comment>
<comment type="similarity">
    <text evidence="3">Belongs to the NDK family.</text>
</comment>
<gene>
    <name type="primary">Nme1</name>
</gene>
<evidence type="ECO:0000250" key="1"/>
<evidence type="ECO:0000250" key="2">
    <source>
        <dbReference type="UniProtKB" id="P15531"/>
    </source>
</evidence>
<evidence type="ECO:0000305" key="3"/>
<reference key="1">
    <citation type="journal article" date="1993" name="J. Biol. Chem.">
        <title>A second form (beta isoform) of nucleoside diphosphate kinase from rat. Isolation and characterization of complementary and genomic DNA and expression.</title>
        <authorList>
            <person name="Shimada N."/>
            <person name="Ishikawa N."/>
            <person name="Munakata Y."/>
            <person name="Toda T."/>
            <person name="Watanabe K."/>
            <person name="Kimura N."/>
        </authorList>
    </citation>
    <scope>NUCLEOTIDE SEQUENCE [MRNA]</scope>
</reference>
<reference key="2">
    <citation type="submission" date="2007-07" db="UniProtKB">
        <authorList>
            <person name="Lubec G."/>
            <person name="Afjehi-Sadat L."/>
            <person name="Chen W.-Q."/>
            <person name="Kang S.U."/>
        </authorList>
    </citation>
    <scope>PROTEIN SEQUENCE OF 7-26; 40-66 AND 89-114</scope>
    <scope>IDENTIFICATION BY MASS SPECTROMETRY</scope>
    <source>
        <strain>Sprague-Dawley</strain>
        <tissue>Brain</tissue>
        <tissue>Hippocampus</tissue>
        <tissue>Spinal cord</tissue>
    </source>
</reference>
<proteinExistence type="evidence at protein level"/>
<protein>
    <recommendedName>
        <fullName>Nucleoside diphosphate kinase A</fullName>
        <shortName>NDK A</shortName>
        <shortName>NDP kinase A</shortName>
        <ecNumber>2.7.4.6</ecNumber>
    </recommendedName>
    <alternativeName>
        <fullName>Metastasis inhibition factor NM23</fullName>
    </alternativeName>
    <alternativeName>
        <fullName>Tumor metastatic process-associated protein</fullName>
    </alternativeName>
</protein>
<name>NDKA_RAT</name>
<accession>Q05982</accession>
<keyword id="KW-0067">ATP-binding</keyword>
<keyword id="KW-0963">Cytoplasm</keyword>
<keyword id="KW-0221">Differentiation</keyword>
<keyword id="KW-0903">Direct protein sequencing</keyword>
<keyword id="KW-0254">Endocytosis</keyword>
<keyword id="KW-1017">Isopeptide bond</keyword>
<keyword id="KW-0418">Kinase</keyword>
<keyword id="KW-0460">Magnesium</keyword>
<keyword id="KW-0479">Metal-binding</keyword>
<keyword id="KW-0524">Neurogenesis</keyword>
<keyword id="KW-0546">Nucleotide metabolism</keyword>
<keyword id="KW-0547">Nucleotide-binding</keyword>
<keyword id="KW-0539">Nucleus</keyword>
<keyword id="KW-0597">Phosphoprotein</keyword>
<keyword id="KW-1185">Reference proteome</keyword>
<keyword id="KW-0808">Transferase</keyword>
<keyword id="KW-0832">Ubl conjugation</keyword>
<sequence length="152" mass="17193">MANSERTFIAIKPDGVQRGLVGEIIKRFEQKGFRLVGLKFIQASEDLLKEHYIDLKDRPFFSGLVKYMHSGPVVAMVWEGLNVVKTGRVMLGETNPADSKPGTIRGDFCIQVGRNIIHGSDSVESAEKEISLWFQPEELVDYKSCAQNWIYE</sequence>
<dbReference type="EC" id="2.7.4.6"/>
<dbReference type="EMBL" id="D13374">
    <property type="protein sequence ID" value="BAA02635.1"/>
    <property type="molecule type" value="mRNA"/>
</dbReference>
<dbReference type="PIR" id="A45208">
    <property type="entry name" value="A45208"/>
</dbReference>
<dbReference type="RefSeq" id="NP_612557.1">
    <property type="nucleotide sequence ID" value="NM_138548.2"/>
</dbReference>
<dbReference type="RefSeq" id="XP_017452467.1">
    <property type="nucleotide sequence ID" value="XM_017596978.3"/>
</dbReference>
<dbReference type="RefSeq" id="XP_017452468.1">
    <property type="nucleotide sequence ID" value="XM_017596979.3"/>
</dbReference>
<dbReference type="RefSeq" id="XP_038941085.1">
    <property type="nucleotide sequence ID" value="XM_039085157.2"/>
</dbReference>
<dbReference type="RefSeq" id="XP_038941086.1">
    <property type="nucleotide sequence ID" value="XM_039085158.2"/>
</dbReference>
<dbReference type="RefSeq" id="XP_063124445.1">
    <property type="nucleotide sequence ID" value="XM_063268375.1"/>
</dbReference>
<dbReference type="SMR" id="Q05982"/>
<dbReference type="BioGRID" id="251322">
    <property type="interactions" value="3"/>
</dbReference>
<dbReference type="CORUM" id="Q05982"/>
<dbReference type="FunCoup" id="Q05982">
    <property type="interactions" value="2307"/>
</dbReference>
<dbReference type="IntAct" id="Q05982">
    <property type="interactions" value="1"/>
</dbReference>
<dbReference type="STRING" id="10116.ENSRNOP00000003658"/>
<dbReference type="iPTMnet" id="Q05982"/>
<dbReference type="PhosphoSitePlus" id="Q05982"/>
<dbReference type="jPOST" id="Q05982"/>
<dbReference type="PaxDb" id="10116-ENSRNOP00000003658"/>
<dbReference type="Ensembl" id="ENSRNOT00000112785.1">
    <property type="protein sequence ID" value="ENSRNOP00000083790.1"/>
    <property type="gene ID" value="ENSRNOG00000002693.3"/>
</dbReference>
<dbReference type="GeneID" id="191575"/>
<dbReference type="KEGG" id="rno:191575"/>
<dbReference type="AGR" id="RGD:70497"/>
<dbReference type="CTD" id="4830"/>
<dbReference type="RGD" id="70497">
    <property type="gene designation" value="Nme1"/>
</dbReference>
<dbReference type="eggNOG" id="KOG0888">
    <property type="taxonomic scope" value="Eukaryota"/>
</dbReference>
<dbReference type="GeneTree" id="ENSGT00940000162213"/>
<dbReference type="HOGENOM" id="CLU_060216_6_3_1"/>
<dbReference type="InParanoid" id="Q05982"/>
<dbReference type="OrthoDB" id="10607at9989"/>
<dbReference type="PhylomeDB" id="Q05982"/>
<dbReference type="TreeFam" id="TF106373"/>
<dbReference type="Reactome" id="R-RNO-499943">
    <property type="pathway name" value="Interconversion of nucleotide di- and triphosphates"/>
</dbReference>
<dbReference type="Reactome" id="R-RNO-9748787">
    <property type="pathway name" value="Azathioprine ADME"/>
</dbReference>
<dbReference type="Reactome" id="R-RNO-9755088">
    <property type="pathway name" value="Ribavirin ADME"/>
</dbReference>
<dbReference type="SABIO-RK" id="Q05982"/>
<dbReference type="PRO" id="PR:Q05982"/>
<dbReference type="Proteomes" id="UP000002494">
    <property type="component" value="Chromosome 10"/>
</dbReference>
<dbReference type="Bgee" id="ENSRNOG00000002693">
    <property type="expression patterns" value="Expressed in frontal cortex and 20 other cell types or tissues"/>
</dbReference>
<dbReference type="GO" id="GO:0005813">
    <property type="term" value="C:centrosome"/>
    <property type="evidence" value="ECO:0000314"/>
    <property type="project" value="RGD"/>
</dbReference>
<dbReference type="GO" id="GO:0005829">
    <property type="term" value="C:cytosol"/>
    <property type="evidence" value="ECO:0000266"/>
    <property type="project" value="RGD"/>
</dbReference>
<dbReference type="GO" id="GO:0005769">
    <property type="term" value="C:early endosome"/>
    <property type="evidence" value="ECO:0000266"/>
    <property type="project" value="RGD"/>
</dbReference>
<dbReference type="GO" id="GO:0005882">
    <property type="term" value="C:intermediate filament"/>
    <property type="evidence" value="ECO:0000314"/>
    <property type="project" value="RGD"/>
</dbReference>
<dbReference type="GO" id="GO:0005741">
    <property type="term" value="C:mitochondrial outer membrane"/>
    <property type="evidence" value="ECO:0000314"/>
    <property type="project" value="CACAO"/>
</dbReference>
<dbReference type="GO" id="GO:0005634">
    <property type="term" value="C:nucleus"/>
    <property type="evidence" value="ECO:0000266"/>
    <property type="project" value="RGD"/>
</dbReference>
<dbReference type="GO" id="GO:0048471">
    <property type="term" value="C:perinuclear region of cytoplasm"/>
    <property type="evidence" value="ECO:0000314"/>
    <property type="project" value="RGD"/>
</dbReference>
<dbReference type="GO" id="GO:0032587">
    <property type="term" value="C:ruffle membrane"/>
    <property type="evidence" value="ECO:0000266"/>
    <property type="project" value="RGD"/>
</dbReference>
<dbReference type="GO" id="GO:0008408">
    <property type="term" value="F:3'-5' exonuclease activity"/>
    <property type="evidence" value="ECO:0000266"/>
    <property type="project" value="RGD"/>
</dbReference>
<dbReference type="GO" id="GO:0005524">
    <property type="term" value="F:ATP binding"/>
    <property type="evidence" value="ECO:0000266"/>
    <property type="project" value="RGD"/>
</dbReference>
<dbReference type="GO" id="GO:0004536">
    <property type="term" value="F:DNA nuclease activity"/>
    <property type="evidence" value="ECO:0000266"/>
    <property type="project" value="RGD"/>
</dbReference>
<dbReference type="GO" id="GO:0019899">
    <property type="term" value="F:enzyme binding"/>
    <property type="evidence" value="ECO:0000353"/>
    <property type="project" value="RGD"/>
</dbReference>
<dbReference type="GO" id="GO:0043015">
    <property type="term" value="F:gamma-tubulin binding"/>
    <property type="evidence" value="ECO:0000314"/>
    <property type="project" value="RGD"/>
</dbReference>
<dbReference type="GO" id="GO:0005525">
    <property type="term" value="F:GTP binding"/>
    <property type="evidence" value="ECO:0000266"/>
    <property type="project" value="RGD"/>
</dbReference>
<dbReference type="GO" id="GO:0042802">
    <property type="term" value="F:identical protein binding"/>
    <property type="evidence" value="ECO:0000266"/>
    <property type="project" value="RGD"/>
</dbReference>
<dbReference type="GO" id="GO:0019215">
    <property type="term" value="F:intermediate filament binding"/>
    <property type="evidence" value="ECO:0000353"/>
    <property type="project" value="RGD"/>
</dbReference>
<dbReference type="GO" id="GO:0000287">
    <property type="term" value="F:magnesium ion binding"/>
    <property type="evidence" value="ECO:0000266"/>
    <property type="project" value="RGD"/>
</dbReference>
<dbReference type="GO" id="GO:0004550">
    <property type="term" value="F:nucleoside diphosphate kinase activity"/>
    <property type="evidence" value="ECO:0000314"/>
    <property type="project" value="RGD"/>
</dbReference>
<dbReference type="GO" id="GO:0043024">
    <property type="term" value="F:ribosomal small subunit binding"/>
    <property type="evidence" value="ECO:0000266"/>
    <property type="project" value="RGD"/>
</dbReference>
<dbReference type="GO" id="GO:0000977">
    <property type="term" value="F:RNA polymerase II transcription regulatory region sequence-specific DNA binding"/>
    <property type="evidence" value="ECO:0000314"/>
    <property type="project" value="RGD"/>
</dbReference>
<dbReference type="GO" id="GO:0003697">
    <property type="term" value="F:single-stranded DNA binding"/>
    <property type="evidence" value="ECO:0000314"/>
    <property type="project" value="RGD"/>
</dbReference>
<dbReference type="GO" id="GO:0030154">
    <property type="term" value="P:cell differentiation"/>
    <property type="evidence" value="ECO:0007669"/>
    <property type="project" value="UniProtKB-KW"/>
</dbReference>
<dbReference type="GO" id="GO:0071398">
    <property type="term" value="P:cellular response to fatty acid"/>
    <property type="evidence" value="ECO:0000270"/>
    <property type="project" value="RGD"/>
</dbReference>
<dbReference type="GO" id="GO:0071333">
    <property type="term" value="P:cellular response to glucose stimulus"/>
    <property type="evidence" value="ECO:0000270"/>
    <property type="project" value="RGD"/>
</dbReference>
<dbReference type="GO" id="GO:0071466">
    <property type="term" value="P:cellular response to xenobiotic stimulus"/>
    <property type="evidence" value="ECO:0000270"/>
    <property type="project" value="RGD"/>
</dbReference>
<dbReference type="GO" id="GO:0006241">
    <property type="term" value="P:CTP biosynthetic process"/>
    <property type="evidence" value="ECO:0007669"/>
    <property type="project" value="InterPro"/>
</dbReference>
<dbReference type="GO" id="GO:0006897">
    <property type="term" value="P:endocytosis"/>
    <property type="evidence" value="ECO:0007669"/>
    <property type="project" value="UniProtKB-KW"/>
</dbReference>
<dbReference type="GO" id="GO:0006183">
    <property type="term" value="P:GTP biosynthetic process"/>
    <property type="evidence" value="ECO:0000314"/>
    <property type="project" value="RGD"/>
</dbReference>
<dbReference type="GO" id="GO:0021766">
    <property type="term" value="P:hippocampus development"/>
    <property type="evidence" value="ECO:0000270"/>
    <property type="project" value="RGD"/>
</dbReference>
<dbReference type="GO" id="GO:0007595">
    <property type="term" value="P:lactation"/>
    <property type="evidence" value="ECO:0000266"/>
    <property type="project" value="RGD"/>
</dbReference>
<dbReference type="GO" id="GO:0030879">
    <property type="term" value="P:mammary gland development"/>
    <property type="evidence" value="ECO:0000266"/>
    <property type="project" value="RGD"/>
</dbReference>
<dbReference type="GO" id="GO:0010629">
    <property type="term" value="P:negative regulation of gene expression"/>
    <property type="evidence" value="ECO:0000314"/>
    <property type="project" value="RGD"/>
</dbReference>
<dbReference type="GO" id="GO:0002762">
    <property type="term" value="P:negative regulation of myeloid leukocyte differentiation"/>
    <property type="evidence" value="ECO:0000314"/>
    <property type="project" value="RGD"/>
</dbReference>
<dbReference type="GO" id="GO:0050679">
    <property type="term" value="P:positive regulation of epithelial cell proliferation"/>
    <property type="evidence" value="ECO:0000266"/>
    <property type="project" value="RGD"/>
</dbReference>
<dbReference type="GO" id="GO:0010976">
    <property type="term" value="P:positive regulation of neuron projection development"/>
    <property type="evidence" value="ECO:0000315"/>
    <property type="project" value="RGD"/>
</dbReference>
<dbReference type="GO" id="GO:0014075">
    <property type="term" value="P:response to amine"/>
    <property type="evidence" value="ECO:0000270"/>
    <property type="project" value="RGD"/>
</dbReference>
<dbReference type="GO" id="GO:0051591">
    <property type="term" value="P:response to cAMP"/>
    <property type="evidence" value="ECO:0000270"/>
    <property type="project" value="RGD"/>
</dbReference>
<dbReference type="GO" id="GO:0033574">
    <property type="term" value="P:response to testosterone"/>
    <property type="evidence" value="ECO:0000270"/>
    <property type="project" value="RGD"/>
</dbReference>
<dbReference type="GO" id="GO:0009410">
    <property type="term" value="P:response to xenobiotic stimulus"/>
    <property type="evidence" value="ECO:0000270"/>
    <property type="project" value="RGD"/>
</dbReference>
<dbReference type="GO" id="GO:0006228">
    <property type="term" value="P:UTP biosynthetic process"/>
    <property type="evidence" value="ECO:0007669"/>
    <property type="project" value="InterPro"/>
</dbReference>
<dbReference type="CDD" id="cd04413">
    <property type="entry name" value="NDPk_I"/>
    <property type="match status" value="1"/>
</dbReference>
<dbReference type="FunFam" id="3.30.70.141:FF:000039">
    <property type="entry name" value="Nucleoside diphosphate kinase B"/>
    <property type="match status" value="1"/>
</dbReference>
<dbReference type="Gene3D" id="3.30.70.141">
    <property type="entry name" value="Nucleoside diphosphate kinase-like domain"/>
    <property type="match status" value="1"/>
</dbReference>
<dbReference type="HAMAP" id="MF_00451">
    <property type="entry name" value="NDP_kinase"/>
    <property type="match status" value="1"/>
</dbReference>
<dbReference type="InterPro" id="IPR034907">
    <property type="entry name" value="NDK-like_dom"/>
</dbReference>
<dbReference type="InterPro" id="IPR036850">
    <property type="entry name" value="NDK-like_dom_sf"/>
</dbReference>
<dbReference type="InterPro" id="IPR001564">
    <property type="entry name" value="Nucleoside_diP_kinase"/>
</dbReference>
<dbReference type="InterPro" id="IPR023005">
    <property type="entry name" value="Nucleoside_diP_kinase_AS"/>
</dbReference>
<dbReference type="NCBIfam" id="NF001908">
    <property type="entry name" value="PRK00668.1"/>
    <property type="match status" value="1"/>
</dbReference>
<dbReference type="PANTHER" id="PTHR11349">
    <property type="entry name" value="NUCLEOSIDE DIPHOSPHATE KINASE"/>
    <property type="match status" value="1"/>
</dbReference>
<dbReference type="Pfam" id="PF00334">
    <property type="entry name" value="NDK"/>
    <property type="match status" value="1"/>
</dbReference>
<dbReference type="PRINTS" id="PR01243">
    <property type="entry name" value="NUCDPKINASE"/>
</dbReference>
<dbReference type="SMART" id="SM00562">
    <property type="entry name" value="NDK"/>
    <property type="match status" value="1"/>
</dbReference>
<dbReference type="SUPFAM" id="SSF54919">
    <property type="entry name" value="Nucleoside diphosphate kinase, NDK"/>
    <property type="match status" value="1"/>
</dbReference>
<dbReference type="PROSITE" id="PS00469">
    <property type="entry name" value="NDPK"/>
    <property type="match status" value="1"/>
</dbReference>
<dbReference type="PROSITE" id="PS51374">
    <property type="entry name" value="NDPK_LIKE"/>
    <property type="match status" value="1"/>
</dbReference>